<feature type="chain" id="PRO_0000308709" description="Inheritance of peroxisomes protein 1">
    <location>
        <begin position="1"/>
        <end position="388"/>
    </location>
</feature>
<feature type="region of interest" description="Disordered" evidence="2">
    <location>
        <begin position="1"/>
        <end position="25"/>
    </location>
</feature>
<accession>Q755Q4</accession>
<organism>
    <name type="scientific">Eremothecium gossypii (strain ATCC 10895 / CBS 109.51 / FGSC 9923 / NRRL Y-1056)</name>
    <name type="common">Yeast</name>
    <name type="synonym">Ashbya gossypii</name>
    <dbReference type="NCBI Taxonomy" id="284811"/>
    <lineage>
        <taxon>Eukaryota</taxon>
        <taxon>Fungi</taxon>
        <taxon>Dikarya</taxon>
        <taxon>Ascomycota</taxon>
        <taxon>Saccharomycotina</taxon>
        <taxon>Saccharomycetes</taxon>
        <taxon>Saccharomycetales</taxon>
        <taxon>Saccharomycetaceae</taxon>
        <taxon>Eremothecium</taxon>
    </lineage>
</organism>
<gene>
    <name type="primary">INP1</name>
    <name type="ordered locus">AFL184W</name>
</gene>
<name>INP1_EREGS</name>
<evidence type="ECO:0000250" key="1"/>
<evidence type="ECO:0000256" key="2">
    <source>
        <dbReference type="SAM" id="MobiDB-lite"/>
    </source>
</evidence>
<evidence type="ECO:0000305" key="3"/>
<reference key="1">
    <citation type="journal article" date="2004" name="Science">
        <title>The Ashbya gossypii genome as a tool for mapping the ancient Saccharomyces cerevisiae genome.</title>
        <authorList>
            <person name="Dietrich F.S."/>
            <person name="Voegeli S."/>
            <person name="Brachat S."/>
            <person name="Lerch A."/>
            <person name="Gates K."/>
            <person name="Steiner S."/>
            <person name="Mohr C."/>
            <person name="Poehlmann R."/>
            <person name="Luedi P."/>
            <person name="Choi S."/>
            <person name="Wing R.A."/>
            <person name="Flavier A."/>
            <person name="Gaffney T.D."/>
            <person name="Philippsen P."/>
        </authorList>
    </citation>
    <scope>NUCLEOTIDE SEQUENCE [LARGE SCALE GENOMIC DNA]</scope>
    <source>
        <strain>ATCC 10895 / CBS 109.51 / FGSC 9923 / NRRL Y-1056</strain>
    </source>
</reference>
<reference key="2">
    <citation type="journal article" date="2013" name="G3 (Bethesda)">
        <title>Genomes of Ashbya fungi isolated from insects reveal four mating-type loci, numerous translocations, lack of transposons, and distinct gene duplications.</title>
        <authorList>
            <person name="Dietrich F.S."/>
            <person name="Voegeli S."/>
            <person name="Kuo S."/>
            <person name="Philippsen P."/>
        </authorList>
    </citation>
    <scope>GENOME REANNOTATION</scope>
    <scope>SEQUENCE REVISION TO C-TERMINUS</scope>
    <source>
        <strain>ATCC 10895 / CBS 109.51 / FGSC 9923 / NRRL Y-1056</strain>
    </source>
</reference>
<dbReference type="EMBL" id="AE016819">
    <property type="protein sequence ID" value="AAS53190.2"/>
    <property type="molecule type" value="Genomic_DNA"/>
</dbReference>
<dbReference type="RefSeq" id="NP_985366.2">
    <property type="nucleotide sequence ID" value="NM_210720.2"/>
</dbReference>
<dbReference type="FunCoup" id="Q755Q4">
    <property type="interactions" value="27"/>
</dbReference>
<dbReference type="STRING" id="284811.Q755Q4"/>
<dbReference type="EnsemblFungi" id="AAS53190">
    <property type="protein sequence ID" value="AAS53190"/>
    <property type="gene ID" value="AGOS_AFL184W"/>
</dbReference>
<dbReference type="GeneID" id="4621591"/>
<dbReference type="KEGG" id="ago:AGOS_AFL184W"/>
<dbReference type="eggNOG" id="ENOG502S7ZC">
    <property type="taxonomic scope" value="Eukaryota"/>
</dbReference>
<dbReference type="HOGENOM" id="CLU_055317_0_0_1"/>
<dbReference type="InParanoid" id="Q755Q4"/>
<dbReference type="OMA" id="WMDIEYD"/>
<dbReference type="OrthoDB" id="4068391at2759"/>
<dbReference type="Proteomes" id="UP000000591">
    <property type="component" value="Chromosome VI"/>
</dbReference>
<dbReference type="GO" id="GO:0005780">
    <property type="term" value="C:extrinsic component of intraperoxisomal membrane"/>
    <property type="evidence" value="ECO:0007669"/>
    <property type="project" value="InterPro"/>
</dbReference>
<dbReference type="GO" id="GO:0045033">
    <property type="term" value="P:peroxisome inheritance"/>
    <property type="evidence" value="ECO:0007669"/>
    <property type="project" value="InterPro"/>
</dbReference>
<dbReference type="InterPro" id="IPR024758">
    <property type="entry name" value="Inp1"/>
</dbReference>
<dbReference type="Pfam" id="PF12634">
    <property type="entry name" value="Inp1"/>
    <property type="match status" value="1"/>
</dbReference>
<dbReference type="PRINTS" id="PR02103">
    <property type="entry name" value="INPROXISOME1"/>
</dbReference>
<keyword id="KW-0472">Membrane</keyword>
<keyword id="KW-0576">Peroxisome</keyword>
<keyword id="KW-1185">Reference proteome</keyword>
<comment type="function">
    <text evidence="1">Required for peroxisome inheritance.</text>
</comment>
<comment type="subcellular location">
    <subcellularLocation>
        <location evidence="1">Peroxisome membrane</location>
        <topology evidence="1">Peripheral membrane protein</topology>
    </subcellularLocation>
</comment>
<comment type="similarity">
    <text evidence="3">Belongs to the INP1 family.</text>
</comment>
<proteinExistence type="inferred from homology"/>
<protein>
    <recommendedName>
        <fullName>Inheritance of peroxisomes protein 1</fullName>
    </recommendedName>
</protein>
<sequence>MARPTNSAASDVIPPSSKTRMPKIKPFKTIRTTFLKKKNTIGNLVSKGTHSSQSGGHKDSYMGDVESLTLRSPQSRGSWVESIDSKKIHSLSNDRVTLFRYEHVRVTSYQSVRKKYRNSGDSRRGQERMESAVKGTDVLRRERASVIEPRGPLEIYQIITPISKEPSQKVTYLCLGRKEQIIKPILPKLRITMLTREGLQFSVLSFNPENSWKIEFLGALGDSAVPCNVILAFENAVKNICRYTSELNNDPIEEVGTEDDDDLEYLLYSDFAEDDDTGSDITLNREHSSEPSDLLNCSTTNEMINDAFRKAIEHIRHVGSMPLIEAHGVKSFSSQLKIDGEQVDPPPKASPRQRAVSVPVETRTWSKLSTHPVALSTWMDIEYDDIKE</sequence>